<reference key="1">
    <citation type="submission" date="2005-08" db="EMBL/GenBank/DDBJ databases">
        <title>Complete sequence of chromosome 1 of Synechococcus elongatus PCC 7942.</title>
        <authorList>
            <consortium name="US DOE Joint Genome Institute"/>
            <person name="Copeland A."/>
            <person name="Lucas S."/>
            <person name="Lapidus A."/>
            <person name="Barry K."/>
            <person name="Detter J.C."/>
            <person name="Glavina T."/>
            <person name="Hammon N."/>
            <person name="Israni S."/>
            <person name="Pitluck S."/>
            <person name="Schmutz J."/>
            <person name="Larimer F."/>
            <person name="Land M."/>
            <person name="Kyrpides N."/>
            <person name="Lykidis A."/>
            <person name="Golden S."/>
            <person name="Richardson P."/>
        </authorList>
    </citation>
    <scope>NUCLEOTIDE SEQUENCE [LARGE SCALE GENOMIC DNA]</scope>
    <source>
        <strain>ATCC 33912 / PCC 7942 / FACHB-805</strain>
    </source>
</reference>
<dbReference type="EC" id="1.2.1.41" evidence="1"/>
<dbReference type="EMBL" id="CP000100">
    <property type="protein sequence ID" value="ABB58295.1"/>
    <property type="molecule type" value="Genomic_DNA"/>
</dbReference>
<dbReference type="RefSeq" id="WP_011244143.1">
    <property type="nucleotide sequence ID" value="NZ_JACJTX010000001.1"/>
</dbReference>
<dbReference type="SMR" id="Q31KX4"/>
<dbReference type="STRING" id="1140.Synpcc7942_2265"/>
<dbReference type="PaxDb" id="1140-Synpcc7942_2265"/>
<dbReference type="KEGG" id="syf:Synpcc7942_2265"/>
<dbReference type="eggNOG" id="COG0014">
    <property type="taxonomic scope" value="Bacteria"/>
</dbReference>
<dbReference type="HOGENOM" id="CLU_030231_0_1_3"/>
<dbReference type="OrthoDB" id="9809970at2"/>
<dbReference type="BioCyc" id="SYNEL:SYNPCC7942_2265-MONOMER"/>
<dbReference type="UniPathway" id="UPA00098">
    <property type="reaction ID" value="UER00360"/>
</dbReference>
<dbReference type="Proteomes" id="UP000889800">
    <property type="component" value="Chromosome"/>
</dbReference>
<dbReference type="GO" id="GO:0005737">
    <property type="term" value="C:cytoplasm"/>
    <property type="evidence" value="ECO:0007669"/>
    <property type="project" value="UniProtKB-SubCell"/>
</dbReference>
<dbReference type="GO" id="GO:0004350">
    <property type="term" value="F:glutamate-5-semialdehyde dehydrogenase activity"/>
    <property type="evidence" value="ECO:0007669"/>
    <property type="project" value="UniProtKB-UniRule"/>
</dbReference>
<dbReference type="GO" id="GO:0050661">
    <property type="term" value="F:NADP binding"/>
    <property type="evidence" value="ECO:0007669"/>
    <property type="project" value="InterPro"/>
</dbReference>
<dbReference type="GO" id="GO:0055129">
    <property type="term" value="P:L-proline biosynthetic process"/>
    <property type="evidence" value="ECO:0007669"/>
    <property type="project" value="UniProtKB-UniRule"/>
</dbReference>
<dbReference type="CDD" id="cd07079">
    <property type="entry name" value="ALDH_F18-19_ProA-GPR"/>
    <property type="match status" value="1"/>
</dbReference>
<dbReference type="FunFam" id="3.40.309.10:FF:000006">
    <property type="entry name" value="Gamma-glutamyl phosphate reductase"/>
    <property type="match status" value="1"/>
</dbReference>
<dbReference type="Gene3D" id="3.40.605.10">
    <property type="entry name" value="Aldehyde Dehydrogenase, Chain A, domain 1"/>
    <property type="match status" value="1"/>
</dbReference>
<dbReference type="Gene3D" id="3.40.309.10">
    <property type="entry name" value="Aldehyde Dehydrogenase, Chain A, domain 2"/>
    <property type="match status" value="1"/>
</dbReference>
<dbReference type="HAMAP" id="MF_00412">
    <property type="entry name" value="ProA"/>
    <property type="match status" value="1"/>
</dbReference>
<dbReference type="InterPro" id="IPR016161">
    <property type="entry name" value="Ald_DH/histidinol_DH"/>
</dbReference>
<dbReference type="InterPro" id="IPR016163">
    <property type="entry name" value="Ald_DH_C"/>
</dbReference>
<dbReference type="InterPro" id="IPR016162">
    <property type="entry name" value="Ald_DH_N"/>
</dbReference>
<dbReference type="InterPro" id="IPR015590">
    <property type="entry name" value="Aldehyde_DH_dom"/>
</dbReference>
<dbReference type="InterPro" id="IPR020593">
    <property type="entry name" value="G-glutamylP_reductase_CS"/>
</dbReference>
<dbReference type="InterPro" id="IPR012134">
    <property type="entry name" value="Glu-5-SA_DH"/>
</dbReference>
<dbReference type="InterPro" id="IPR000965">
    <property type="entry name" value="GPR_dom"/>
</dbReference>
<dbReference type="NCBIfam" id="NF001221">
    <property type="entry name" value="PRK00197.1"/>
    <property type="match status" value="1"/>
</dbReference>
<dbReference type="NCBIfam" id="TIGR00407">
    <property type="entry name" value="proA"/>
    <property type="match status" value="1"/>
</dbReference>
<dbReference type="PANTHER" id="PTHR11063:SF8">
    <property type="entry name" value="DELTA-1-PYRROLINE-5-CARBOXYLATE SYNTHASE"/>
    <property type="match status" value="1"/>
</dbReference>
<dbReference type="PANTHER" id="PTHR11063">
    <property type="entry name" value="GLUTAMATE SEMIALDEHYDE DEHYDROGENASE"/>
    <property type="match status" value="1"/>
</dbReference>
<dbReference type="Pfam" id="PF00171">
    <property type="entry name" value="Aldedh"/>
    <property type="match status" value="1"/>
</dbReference>
<dbReference type="PIRSF" id="PIRSF000151">
    <property type="entry name" value="GPR"/>
    <property type="match status" value="1"/>
</dbReference>
<dbReference type="SUPFAM" id="SSF53720">
    <property type="entry name" value="ALDH-like"/>
    <property type="match status" value="1"/>
</dbReference>
<dbReference type="PROSITE" id="PS01223">
    <property type="entry name" value="PROA"/>
    <property type="match status" value="1"/>
</dbReference>
<protein>
    <recommendedName>
        <fullName evidence="1">Gamma-glutamyl phosphate reductase</fullName>
        <shortName evidence="1">GPR</shortName>
        <ecNumber evidence="1">1.2.1.41</ecNumber>
    </recommendedName>
    <alternativeName>
        <fullName evidence="1">Glutamate-5-semialdehyde dehydrogenase</fullName>
    </alternativeName>
    <alternativeName>
        <fullName evidence="1">Glutamyl-gamma-semialdehyde dehydrogenase</fullName>
        <shortName evidence="1">GSA dehydrogenase</shortName>
    </alternativeName>
</protein>
<accession>Q31KX4</accession>
<gene>
    <name evidence="1" type="primary">proA</name>
    <name type="ordered locus">Synpcc7942_2265</name>
</gene>
<keyword id="KW-0028">Amino-acid biosynthesis</keyword>
<keyword id="KW-0963">Cytoplasm</keyword>
<keyword id="KW-0521">NADP</keyword>
<keyword id="KW-0560">Oxidoreductase</keyword>
<keyword id="KW-0641">Proline biosynthesis</keyword>
<keyword id="KW-1185">Reference proteome</keyword>
<feature type="chain" id="PRO_0000252602" description="Gamma-glutamyl phosphate reductase">
    <location>
        <begin position="1"/>
        <end position="431"/>
    </location>
</feature>
<proteinExistence type="inferred from homology"/>
<comment type="function">
    <text evidence="1">Catalyzes the NADPH-dependent reduction of L-glutamate 5-phosphate into L-glutamate 5-semialdehyde and phosphate. The product spontaneously undergoes cyclization to form 1-pyrroline-5-carboxylate.</text>
</comment>
<comment type="catalytic activity">
    <reaction evidence="1">
        <text>L-glutamate 5-semialdehyde + phosphate + NADP(+) = L-glutamyl 5-phosphate + NADPH + H(+)</text>
        <dbReference type="Rhea" id="RHEA:19541"/>
        <dbReference type="ChEBI" id="CHEBI:15378"/>
        <dbReference type="ChEBI" id="CHEBI:43474"/>
        <dbReference type="ChEBI" id="CHEBI:57783"/>
        <dbReference type="ChEBI" id="CHEBI:58066"/>
        <dbReference type="ChEBI" id="CHEBI:58274"/>
        <dbReference type="ChEBI" id="CHEBI:58349"/>
        <dbReference type="EC" id="1.2.1.41"/>
    </reaction>
</comment>
<comment type="pathway">
    <text evidence="1">Amino-acid biosynthesis; L-proline biosynthesis; L-glutamate 5-semialdehyde from L-glutamate: step 2/2.</text>
</comment>
<comment type="subcellular location">
    <subcellularLocation>
        <location evidence="1">Cytoplasm</location>
    </subcellularLocation>
</comment>
<comment type="similarity">
    <text evidence="1">Belongs to the gamma-glutamyl phosphate reductase family.</text>
</comment>
<sequence length="431" mass="45745">MATLSVDLEVQAQATRAAARQLAQWSGADRQRLLSAIATTLEQEAPRILAANQADCEAATTEGIAPALYARLKLDADKLAAAIAGVRDLAQLPDPLGQIQIDRELDEGLILQRLTCPVGVLGVIFEARPDAVIQIASLAIKSGNGAILKGGREAICSCQAIVAAIAQALAEQQAPVEAIRLLTSREETLALLKLDRYVDLIIPRGSNSFVRFVQDNTHIPVLGHADGICHLYVDQAAAIEKTVTITVDAKTQYPAACNAIETLLIHEAIAPQFLPVVAAALHEKGVSLRGDAAAQTIVPMEAATEEDWRTEYSDLVLAVRLVPSLDAAIAHINEYGSGHTDAIATEDAAAAAQFFSQVDSAGVYHNCSTRFADGFRYGFGAEVGISTQKLPPRGPVGLEGLVTYKYVLSGDGQIAATYSGAQAKPFLHRDR</sequence>
<organism>
    <name type="scientific">Synechococcus elongatus (strain ATCC 33912 / PCC 7942 / FACHB-805)</name>
    <name type="common">Anacystis nidulans R2</name>
    <dbReference type="NCBI Taxonomy" id="1140"/>
    <lineage>
        <taxon>Bacteria</taxon>
        <taxon>Bacillati</taxon>
        <taxon>Cyanobacteriota</taxon>
        <taxon>Cyanophyceae</taxon>
        <taxon>Synechococcales</taxon>
        <taxon>Synechococcaceae</taxon>
        <taxon>Synechococcus</taxon>
    </lineage>
</organism>
<name>PROA_SYNE7</name>
<evidence type="ECO:0000255" key="1">
    <source>
        <dbReference type="HAMAP-Rule" id="MF_00412"/>
    </source>
</evidence>